<feature type="chain" id="PRO_1000020140" description="Methionyl-tRNA formyltransferase">
    <location>
        <begin position="1"/>
        <end position="323"/>
    </location>
</feature>
<feature type="binding site" evidence="1">
    <location>
        <begin position="117"/>
        <end position="120"/>
    </location>
    <ligand>
        <name>(6S)-5,6,7,8-tetrahydrofolate</name>
        <dbReference type="ChEBI" id="CHEBI:57453"/>
    </ligand>
</feature>
<name>FMT_ALBFT</name>
<dbReference type="EC" id="2.1.2.9" evidence="1"/>
<dbReference type="EMBL" id="CP000267">
    <property type="protein sequence ID" value="ABD71558.1"/>
    <property type="molecule type" value="Genomic_DNA"/>
</dbReference>
<dbReference type="RefSeq" id="WP_011466121.1">
    <property type="nucleotide sequence ID" value="NC_007908.1"/>
</dbReference>
<dbReference type="SMR" id="Q21RP5"/>
<dbReference type="STRING" id="338969.Rfer_3859"/>
<dbReference type="KEGG" id="rfr:Rfer_3859"/>
<dbReference type="eggNOG" id="COG0223">
    <property type="taxonomic scope" value="Bacteria"/>
</dbReference>
<dbReference type="HOGENOM" id="CLU_033347_1_2_4"/>
<dbReference type="OrthoDB" id="9802815at2"/>
<dbReference type="Proteomes" id="UP000008332">
    <property type="component" value="Chromosome"/>
</dbReference>
<dbReference type="GO" id="GO:0005829">
    <property type="term" value="C:cytosol"/>
    <property type="evidence" value="ECO:0007669"/>
    <property type="project" value="TreeGrafter"/>
</dbReference>
<dbReference type="GO" id="GO:0004479">
    <property type="term" value="F:methionyl-tRNA formyltransferase activity"/>
    <property type="evidence" value="ECO:0007669"/>
    <property type="project" value="UniProtKB-UniRule"/>
</dbReference>
<dbReference type="CDD" id="cd08646">
    <property type="entry name" value="FMT_core_Met-tRNA-FMT_N"/>
    <property type="match status" value="1"/>
</dbReference>
<dbReference type="CDD" id="cd08704">
    <property type="entry name" value="Met_tRNA_FMT_C"/>
    <property type="match status" value="1"/>
</dbReference>
<dbReference type="Gene3D" id="3.10.25.10">
    <property type="entry name" value="Formyl transferase, C-terminal domain"/>
    <property type="match status" value="1"/>
</dbReference>
<dbReference type="Gene3D" id="3.40.50.170">
    <property type="entry name" value="Formyl transferase, N-terminal domain"/>
    <property type="match status" value="1"/>
</dbReference>
<dbReference type="HAMAP" id="MF_00182">
    <property type="entry name" value="Formyl_trans"/>
    <property type="match status" value="1"/>
</dbReference>
<dbReference type="InterPro" id="IPR005794">
    <property type="entry name" value="Fmt"/>
</dbReference>
<dbReference type="InterPro" id="IPR005793">
    <property type="entry name" value="Formyl_trans_C"/>
</dbReference>
<dbReference type="InterPro" id="IPR037022">
    <property type="entry name" value="Formyl_trans_C_sf"/>
</dbReference>
<dbReference type="InterPro" id="IPR002376">
    <property type="entry name" value="Formyl_transf_N"/>
</dbReference>
<dbReference type="InterPro" id="IPR036477">
    <property type="entry name" value="Formyl_transf_N_sf"/>
</dbReference>
<dbReference type="InterPro" id="IPR011034">
    <property type="entry name" value="Formyl_transferase-like_C_sf"/>
</dbReference>
<dbReference type="InterPro" id="IPR001555">
    <property type="entry name" value="GART_AS"/>
</dbReference>
<dbReference type="InterPro" id="IPR044135">
    <property type="entry name" value="Met-tRNA-FMT_C"/>
</dbReference>
<dbReference type="InterPro" id="IPR041711">
    <property type="entry name" value="Met-tRNA-FMT_N"/>
</dbReference>
<dbReference type="NCBIfam" id="TIGR00460">
    <property type="entry name" value="fmt"/>
    <property type="match status" value="1"/>
</dbReference>
<dbReference type="PANTHER" id="PTHR11138">
    <property type="entry name" value="METHIONYL-TRNA FORMYLTRANSFERASE"/>
    <property type="match status" value="1"/>
</dbReference>
<dbReference type="PANTHER" id="PTHR11138:SF5">
    <property type="entry name" value="METHIONYL-TRNA FORMYLTRANSFERASE, MITOCHONDRIAL"/>
    <property type="match status" value="1"/>
</dbReference>
<dbReference type="Pfam" id="PF02911">
    <property type="entry name" value="Formyl_trans_C"/>
    <property type="match status" value="1"/>
</dbReference>
<dbReference type="Pfam" id="PF00551">
    <property type="entry name" value="Formyl_trans_N"/>
    <property type="match status" value="1"/>
</dbReference>
<dbReference type="SUPFAM" id="SSF50486">
    <property type="entry name" value="FMT C-terminal domain-like"/>
    <property type="match status" value="1"/>
</dbReference>
<dbReference type="SUPFAM" id="SSF53328">
    <property type="entry name" value="Formyltransferase"/>
    <property type="match status" value="1"/>
</dbReference>
<dbReference type="PROSITE" id="PS00373">
    <property type="entry name" value="GART"/>
    <property type="match status" value="1"/>
</dbReference>
<evidence type="ECO:0000255" key="1">
    <source>
        <dbReference type="HAMAP-Rule" id="MF_00182"/>
    </source>
</evidence>
<reference key="1">
    <citation type="submission" date="2006-02" db="EMBL/GenBank/DDBJ databases">
        <title>Complete sequence of chromosome of Rhodoferax ferrireducens DSM 15236.</title>
        <authorList>
            <person name="Copeland A."/>
            <person name="Lucas S."/>
            <person name="Lapidus A."/>
            <person name="Barry K."/>
            <person name="Detter J.C."/>
            <person name="Glavina del Rio T."/>
            <person name="Hammon N."/>
            <person name="Israni S."/>
            <person name="Pitluck S."/>
            <person name="Brettin T."/>
            <person name="Bruce D."/>
            <person name="Han C."/>
            <person name="Tapia R."/>
            <person name="Gilna P."/>
            <person name="Kiss H."/>
            <person name="Schmutz J."/>
            <person name="Larimer F."/>
            <person name="Land M."/>
            <person name="Kyrpides N."/>
            <person name="Ivanova N."/>
            <person name="Richardson P."/>
        </authorList>
    </citation>
    <scope>NUCLEOTIDE SEQUENCE [LARGE SCALE GENOMIC DNA]</scope>
    <source>
        <strain>ATCC BAA-621 / DSM 15236 / T118</strain>
    </source>
</reference>
<comment type="function">
    <text evidence="1">Attaches a formyl group to the free amino group of methionyl-tRNA(fMet). The formyl group appears to play a dual role in the initiator identity of N-formylmethionyl-tRNA by promoting its recognition by IF2 and preventing the misappropriation of this tRNA by the elongation apparatus.</text>
</comment>
<comment type="catalytic activity">
    <reaction evidence="1">
        <text>L-methionyl-tRNA(fMet) + (6R)-10-formyltetrahydrofolate = N-formyl-L-methionyl-tRNA(fMet) + (6S)-5,6,7,8-tetrahydrofolate + H(+)</text>
        <dbReference type="Rhea" id="RHEA:24380"/>
        <dbReference type="Rhea" id="RHEA-COMP:9952"/>
        <dbReference type="Rhea" id="RHEA-COMP:9953"/>
        <dbReference type="ChEBI" id="CHEBI:15378"/>
        <dbReference type="ChEBI" id="CHEBI:57453"/>
        <dbReference type="ChEBI" id="CHEBI:78530"/>
        <dbReference type="ChEBI" id="CHEBI:78844"/>
        <dbReference type="ChEBI" id="CHEBI:195366"/>
        <dbReference type="EC" id="2.1.2.9"/>
    </reaction>
</comment>
<comment type="similarity">
    <text evidence="1">Belongs to the Fmt family.</text>
</comment>
<proteinExistence type="inferred from homology"/>
<gene>
    <name evidence="1" type="primary">fmt</name>
    <name type="ordered locus">Rfer_3859</name>
</gene>
<accession>Q21RP5</accession>
<organism>
    <name type="scientific">Albidiferax ferrireducens (strain ATCC BAA-621 / DSM 15236 / T118)</name>
    <name type="common">Rhodoferax ferrireducens</name>
    <dbReference type="NCBI Taxonomy" id="338969"/>
    <lineage>
        <taxon>Bacteria</taxon>
        <taxon>Pseudomonadati</taxon>
        <taxon>Pseudomonadota</taxon>
        <taxon>Betaproteobacteria</taxon>
        <taxon>Burkholderiales</taxon>
        <taxon>Comamonadaceae</taxon>
        <taxon>Rhodoferax</taxon>
    </lineage>
</organism>
<protein>
    <recommendedName>
        <fullName evidence="1">Methionyl-tRNA formyltransferase</fullName>
        <ecNumber evidence="1">2.1.2.9</ecNumber>
    </recommendedName>
</protein>
<keyword id="KW-0648">Protein biosynthesis</keyword>
<keyword id="KW-1185">Reference proteome</keyword>
<keyword id="KW-0808">Transferase</keyword>
<sequence length="323" mass="33991">MRLIFAGTPEFARVALAQLHAGGHEIALVLTQPDRPAGRGMKLQASAVKQFALDHGLALAQPRSLRLDGKYPEDAAAAREALVAAQADAMVVAAYGLILPQWVLDVPARGCFNIHASLLPRWRGAAPIHRAIEAGDAQTGVTIMQMDAGLDTGAMLQAQAIPIGAGDTTGSLHDRLAELGAQLMLQVLAQAVHGSLQPVAQAAQGVTYAPKIEKHEAAIDWTQPAAVIAQRIRAFNPFPGATAVLNGETLKIWLADVAPGVPPVSKEFGSILAVAPVGIEVVAMKSIVNITQLQRPGGKRLGVAEFLRGFDLQPGMVFERHGS</sequence>